<protein>
    <recommendedName>
        <fullName evidence="1">Erythronate-4-phosphate dehydrogenase</fullName>
        <ecNumber evidence="1">1.1.1.290</ecNumber>
    </recommendedName>
</protein>
<feature type="chain" id="PRO_1000188267" description="Erythronate-4-phosphate dehydrogenase">
    <location>
        <begin position="1"/>
        <end position="378"/>
    </location>
</feature>
<feature type="active site" evidence="1">
    <location>
        <position position="208"/>
    </location>
</feature>
<feature type="active site" evidence="1">
    <location>
        <position position="237"/>
    </location>
</feature>
<feature type="active site" description="Proton donor" evidence="1">
    <location>
        <position position="254"/>
    </location>
</feature>
<feature type="binding site" evidence="1">
    <location>
        <position position="45"/>
    </location>
    <ligand>
        <name>substrate</name>
    </ligand>
</feature>
<feature type="binding site" evidence="1">
    <location>
        <position position="66"/>
    </location>
    <ligand>
        <name>substrate</name>
    </ligand>
</feature>
<feature type="binding site" evidence="1">
    <location>
        <position position="146"/>
    </location>
    <ligand>
        <name>NAD(+)</name>
        <dbReference type="ChEBI" id="CHEBI:57540"/>
    </ligand>
</feature>
<feature type="binding site" evidence="1">
    <location>
        <position position="175"/>
    </location>
    <ligand>
        <name>NAD(+)</name>
        <dbReference type="ChEBI" id="CHEBI:57540"/>
    </ligand>
</feature>
<feature type="binding site" evidence="1">
    <location>
        <position position="232"/>
    </location>
    <ligand>
        <name>NAD(+)</name>
        <dbReference type="ChEBI" id="CHEBI:57540"/>
    </ligand>
</feature>
<feature type="binding site" evidence="1">
    <location>
        <position position="257"/>
    </location>
    <ligand>
        <name>NAD(+)</name>
        <dbReference type="ChEBI" id="CHEBI:57540"/>
    </ligand>
</feature>
<feature type="binding site" evidence="1">
    <location>
        <position position="258"/>
    </location>
    <ligand>
        <name>substrate</name>
    </ligand>
</feature>
<evidence type="ECO:0000255" key="1">
    <source>
        <dbReference type="HAMAP-Rule" id="MF_01825"/>
    </source>
</evidence>
<accession>B6I4U8</accession>
<sequence length="378" mass="41306">MKILVDENMPYARDLFSRLGEVTAVPGRPIPVAQLADADALMVRSVTKVNESLLAGKPIKFVGTATAGTDHVDEAWLKQAGIGFSAAPGCNAIAVVEYVFSSLLMLAERDGFSLHDRTVGIVGVGNVGRRLQARLEALGIKTLLCDPPRADRGDEGDFRSLDELVQHADILTFHTPLFKDGPYKTLHLADEKLIRSLKPGAILINACRGAVVDNTALLTCLNEGQKLSVVLDVWEGEPELNVELLTKVDIGTPHIAGYTLEGKARGTTQVFEAYSKFIGHEQHVALDTLLPAPEFGRITLHGPLDQPTLKRLVHLVYDVRRDDAPLRKVAGIPGEFDKLRKNYLERREWSSLYVICDDASAASLLCKLGFNAVHHPAR</sequence>
<keyword id="KW-0963">Cytoplasm</keyword>
<keyword id="KW-0520">NAD</keyword>
<keyword id="KW-0560">Oxidoreductase</keyword>
<keyword id="KW-0664">Pyridoxine biosynthesis</keyword>
<comment type="function">
    <text evidence="1">Catalyzes the oxidation of erythronate-4-phosphate to 3-hydroxy-2-oxo-4-phosphonooxybutanoate.</text>
</comment>
<comment type="catalytic activity">
    <reaction evidence="1">
        <text>4-phospho-D-erythronate + NAD(+) = (R)-3-hydroxy-2-oxo-4-phosphooxybutanoate + NADH + H(+)</text>
        <dbReference type="Rhea" id="RHEA:18829"/>
        <dbReference type="ChEBI" id="CHEBI:15378"/>
        <dbReference type="ChEBI" id="CHEBI:57540"/>
        <dbReference type="ChEBI" id="CHEBI:57945"/>
        <dbReference type="ChEBI" id="CHEBI:58538"/>
        <dbReference type="ChEBI" id="CHEBI:58766"/>
        <dbReference type="EC" id="1.1.1.290"/>
    </reaction>
</comment>
<comment type="pathway">
    <text evidence="1">Cofactor biosynthesis; pyridoxine 5'-phosphate biosynthesis; pyridoxine 5'-phosphate from D-erythrose 4-phosphate: step 2/5.</text>
</comment>
<comment type="subunit">
    <text evidence="1">Homodimer.</text>
</comment>
<comment type="subcellular location">
    <subcellularLocation>
        <location evidence="1">Cytoplasm</location>
    </subcellularLocation>
</comment>
<comment type="similarity">
    <text evidence="1">Belongs to the D-isomer specific 2-hydroxyacid dehydrogenase family. PdxB subfamily.</text>
</comment>
<name>PDXB_ECOSE</name>
<organism>
    <name type="scientific">Escherichia coli (strain SE11)</name>
    <dbReference type="NCBI Taxonomy" id="409438"/>
    <lineage>
        <taxon>Bacteria</taxon>
        <taxon>Pseudomonadati</taxon>
        <taxon>Pseudomonadota</taxon>
        <taxon>Gammaproteobacteria</taxon>
        <taxon>Enterobacterales</taxon>
        <taxon>Enterobacteriaceae</taxon>
        <taxon>Escherichia</taxon>
    </lineage>
</organism>
<proteinExistence type="inferred from homology"/>
<gene>
    <name evidence="1" type="primary">pdxB</name>
    <name type="ordered locus">ECSE_2629</name>
</gene>
<reference key="1">
    <citation type="journal article" date="2008" name="DNA Res.">
        <title>Complete genome sequence and comparative analysis of the wild-type commensal Escherichia coli strain SE11 isolated from a healthy adult.</title>
        <authorList>
            <person name="Oshima K."/>
            <person name="Toh H."/>
            <person name="Ogura Y."/>
            <person name="Sasamoto H."/>
            <person name="Morita H."/>
            <person name="Park S.-H."/>
            <person name="Ooka T."/>
            <person name="Iyoda S."/>
            <person name="Taylor T.D."/>
            <person name="Hayashi T."/>
            <person name="Itoh K."/>
            <person name="Hattori M."/>
        </authorList>
    </citation>
    <scope>NUCLEOTIDE SEQUENCE [LARGE SCALE GENOMIC DNA]</scope>
    <source>
        <strain>SE11</strain>
    </source>
</reference>
<dbReference type="EC" id="1.1.1.290" evidence="1"/>
<dbReference type="EMBL" id="AP009240">
    <property type="protein sequence ID" value="BAG78153.1"/>
    <property type="molecule type" value="Genomic_DNA"/>
</dbReference>
<dbReference type="RefSeq" id="WP_000699121.1">
    <property type="nucleotide sequence ID" value="NC_011415.1"/>
</dbReference>
<dbReference type="SMR" id="B6I4U8"/>
<dbReference type="GeneID" id="93774854"/>
<dbReference type="KEGG" id="ecy:ECSE_2629"/>
<dbReference type="HOGENOM" id="CLU_019796_4_0_6"/>
<dbReference type="UniPathway" id="UPA00244">
    <property type="reaction ID" value="UER00310"/>
</dbReference>
<dbReference type="Proteomes" id="UP000008199">
    <property type="component" value="Chromosome"/>
</dbReference>
<dbReference type="GO" id="GO:0005829">
    <property type="term" value="C:cytosol"/>
    <property type="evidence" value="ECO:0007669"/>
    <property type="project" value="UniProtKB-ARBA"/>
</dbReference>
<dbReference type="GO" id="GO:0033711">
    <property type="term" value="F:4-phosphoerythronate dehydrogenase activity"/>
    <property type="evidence" value="ECO:0007669"/>
    <property type="project" value="UniProtKB-EC"/>
</dbReference>
<dbReference type="GO" id="GO:0051287">
    <property type="term" value="F:NAD binding"/>
    <property type="evidence" value="ECO:0007669"/>
    <property type="project" value="InterPro"/>
</dbReference>
<dbReference type="GO" id="GO:0046983">
    <property type="term" value="F:protein dimerization activity"/>
    <property type="evidence" value="ECO:0007669"/>
    <property type="project" value="InterPro"/>
</dbReference>
<dbReference type="GO" id="GO:0036001">
    <property type="term" value="P:'de novo' pyridoxal 5'-phosphate biosynthetic process"/>
    <property type="evidence" value="ECO:0007669"/>
    <property type="project" value="TreeGrafter"/>
</dbReference>
<dbReference type="GO" id="GO:0008615">
    <property type="term" value="P:pyridoxine biosynthetic process"/>
    <property type="evidence" value="ECO:0007669"/>
    <property type="project" value="UniProtKB-UniRule"/>
</dbReference>
<dbReference type="CDD" id="cd12158">
    <property type="entry name" value="ErythrP_dh"/>
    <property type="match status" value="1"/>
</dbReference>
<dbReference type="FunFam" id="3.30.1370.170:FF:000001">
    <property type="entry name" value="Erythronate-4-phosphate dehydrogenase"/>
    <property type="match status" value="1"/>
</dbReference>
<dbReference type="FunFam" id="3.40.50.720:FF:000093">
    <property type="entry name" value="Erythronate-4-phosphate dehydrogenase"/>
    <property type="match status" value="1"/>
</dbReference>
<dbReference type="Gene3D" id="3.30.1370.170">
    <property type="match status" value="1"/>
</dbReference>
<dbReference type="Gene3D" id="3.40.50.720">
    <property type="entry name" value="NAD(P)-binding Rossmann-like Domain"/>
    <property type="match status" value="2"/>
</dbReference>
<dbReference type="HAMAP" id="MF_01825">
    <property type="entry name" value="PdxB"/>
    <property type="match status" value="1"/>
</dbReference>
<dbReference type="InterPro" id="IPR006139">
    <property type="entry name" value="D-isomer_2_OHA_DH_cat_dom"/>
</dbReference>
<dbReference type="InterPro" id="IPR029753">
    <property type="entry name" value="D-isomer_DH_CS"/>
</dbReference>
<dbReference type="InterPro" id="IPR029752">
    <property type="entry name" value="D-isomer_DH_CS1"/>
</dbReference>
<dbReference type="InterPro" id="IPR006140">
    <property type="entry name" value="D-isomer_DH_NAD-bd"/>
</dbReference>
<dbReference type="InterPro" id="IPR020921">
    <property type="entry name" value="Erythronate-4-P_DHase"/>
</dbReference>
<dbReference type="InterPro" id="IPR024531">
    <property type="entry name" value="Erythronate-4-P_DHase_dimer"/>
</dbReference>
<dbReference type="InterPro" id="IPR036291">
    <property type="entry name" value="NAD(P)-bd_dom_sf"/>
</dbReference>
<dbReference type="InterPro" id="IPR038251">
    <property type="entry name" value="PdxB_dimer_sf"/>
</dbReference>
<dbReference type="NCBIfam" id="NF001309">
    <property type="entry name" value="PRK00257.1"/>
    <property type="match status" value="1"/>
</dbReference>
<dbReference type="NCBIfam" id="NF011966">
    <property type="entry name" value="PRK15438.1"/>
    <property type="match status" value="1"/>
</dbReference>
<dbReference type="PANTHER" id="PTHR42938">
    <property type="entry name" value="FORMATE DEHYDROGENASE 1"/>
    <property type="match status" value="1"/>
</dbReference>
<dbReference type="PANTHER" id="PTHR42938:SF9">
    <property type="entry name" value="FORMATE DEHYDROGENASE 1"/>
    <property type="match status" value="1"/>
</dbReference>
<dbReference type="Pfam" id="PF00389">
    <property type="entry name" value="2-Hacid_dh"/>
    <property type="match status" value="1"/>
</dbReference>
<dbReference type="Pfam" id="PF02826">
    <property type="entry name" value="2-Hacid_dh_C"/>
    <property type="match status" value="1"/>
</dbReference>
<dbReference type="Pfam" id="PF11890">
    <property type="entry name" value="DUF3410"/>
    <property type="match status" value="1"/>
</dbReference>
<dbReference type="SUPFAM" id="SSF52283">
    <property type="entry name" value="Formate/glycerate dehydrogenase catalytic domain-like"/>
    <property type="match status" value="1"/>
</dbReference>
<dbReference type="SUPFAM" id="SSF51735">
    <property type="entry name" value="NAD(P)-binding Rossmann-fold domains"/>
    <property type="match status" value="1"/>
</dbReference>
<dbReference type="PROSITE" id="PS00065">
    <property type="entry name" value="D_2_HYDROXYACID_DH_1"/>
    <property type="match status" value="1"/>
</dbReference>
<dbReference type="PROSITE" id="PS00671">
    <property type="entry name" value="D_2_HYDROXYACID_DH_3"/>
    <property type="match status" value="1"/>
</dbReference>